<comment type="function">
    <text evidence="3">MFS-type transporter; part of the gene cluster that mediates the biosynthesis of oryzines, natural products with an unusual maleidride backbone.</text>
</comment>
<comment type="subcellular location">
    <subcellularLocation>
        <location evidence="1">Membrane</location>
        <topology evidence="1">Multi-pass membrane protein</topology>
    </subcellularLocation>
</comment>
<comment type="similarity">
    <text evidence="5">Belongs to the major facilitator superfamily.</text>
</comment>
<proteinExistence type="inferred from homology"/>
<name>ORYF_ASPOR</name>
<dbReference type="EMBL" id="BA000056">
    <property type="protein sequence ID" value="BAE66071.1"/>
    <property type="molecule type" value="Genomic_DNA"/>
</dbReference>
<dbReference type="RefSeq" id="XP_001827204.1">
    <property type="nucleotide sequence ID" value="XM_001827152.1"/>
</dbReference>
<dbReference type="SMR" id="Q2TXF2"/>
<dbReference type="EnsemblFungi" id="BAE66071">
    <property type="protein sequence ID" value="BAE66071"/>
    <property type="gene ID" value="AO090010000169"/>
</dbReference>
<dbReference type="GeneID" id="5999338"/>
<dbReference type="KEGG" id="aor:AO090010000169"/>
<dbReference type="VEuPathDB" id="FungiDB:AO090010000169"/>
<dbReference type="HOGENOM" id="CLU_008455_1_3_1"/>
<dbReference type="OMA" id="YQCIQAY"/>
<dbReference type="OrthoDB" id="72688at5052"/>
<dbReference type="Proteomes" id="UP000006564">
    <property type="component" value="Chromosome 8"/>
</dbReference>
<dbReference type="GO" id="GO:0016020">
    <property type="term" value="C:membrane"/>
    <property type="evidence" value="ECO:0007669"/>
    <property type="project" value="UniProtKB-SubCell"/>
</dbReference>
<dbReference type="GO" id="GO:0022857">
    <property type="term" value="F:transmembrane transporter activity"/>
    <property type="evidence" value="ECO:0007669"/>
    <property type="project" value="InterPro"/>
</dbReference>
<dbReference type="CDD" id="cd17323">
    <property type="entry name" value="MFS_Tpo1_MDR_like"/>
    <property type="match status" value="1"/>
</dbReference>
<dbReference type="Gene3D" id="1.20.1250.20">
    <property type="entry name" value="MFS general substrate transporter like domains"/>
    <property type="match status" value="1"/>
</dbReference>
<dbReference type="InterPro" id="IPR011701">
    <property type="entry name" value="MFS"/>
</dbReference>
<dbReference type="InterPro" id="IPR020846">
    <property type="entry name" value="MFS_dom"/>
</dbReference>
<dbReference type="InterPro" id="IPR036259">
    <property type="entry name" value="MFS_trans_sf"/>
</dbReference>
<dbReference type="PANTHER" id="PTHR23502">
    <property type="entry name" value="MAJOR FACILITATOR SUPERFAMILY"/>
    <property type="match status" value="1"/>
</dbReference>
<dbReference type="PANTHER" id="PTHR23502:SF60">
    <property type="entry name" value="MAJOR FACILITATOR SUPERFAMILY (MFS) PROFILE DOMAIN-CONTAINING PROTEIN-RELATED"/>
    <property type="match status" value="1"/>
</dbReference>
<dbReference type="Pfam" id="PF07690">
    <property type="entry name" value="MFS_1"/>
    <property type="match status" value="1"/>
</dbReference>
<dbReference type="SUPFAM" id="SSF103473">
    <property type="entry name" value="MFS general substrate transporter"/>
    <property type="match status" value="1"/>
</dbReference>
<dbReference type="PROSITE" id="PS50850">
    <property type="entry name" value="MFS"/>
    <property type="match status" value="1"/>
</dbReference>
<evidence type="ECO:0000255" key="1"/>
<evidence type="ECO:0000256" key="2">
    <source>
        <dbReference type="SAM" id="MobiDB-lite"/>
    </source>
</evidence>
<evidence type="ECO:0000269" key="3">
    <source>
    </source>
</evidence>
<evidence type="ECO:0000303" key="4">
    <source>
    </source>
</evidence>
<evidence type="ECO:0000305" key="5"/>
<sequence>MAEEVNERTRLLSQSDDPSPSLEELEEWEEPRNWKVSYRWLCIAVISVYGLISPVIAAIIVPAMPQIATDLNVTDPGMLQAFVSVYVLGWSFAPLVVGPLSEVYGRISLLNTGHGLFLVFNALCAFARSDYELLILRFITGAVGSAPLSIGAGIIGDLWAPEERGLSISLYTLGPLLGPAIAPITGAYIVSHTSWRAIFAWCSLYILITWVVGLCTLRETFRPVLIQRKQAAAVRKGQLPGSVQHHHKSLADVFRQDLRRPFTFLGTQPIIQVLSLFMGYLFGLNHLSITTFESVWTDIYNQTPSRAALNYISIAGGFILGSQITGSLNDRIYIYYTSKDPAKGTPELRTILMLPAALLVPTGLLIYGWSAQTHSHWIMPNIGIGIYALGLIMSYQCIQAYVLDCYAVYAASAMGALTILRSLLGFVLPILAPLIYRTLGYGWGSSLLALWALVMGGLVPILLWRYGAVLRKRSGILEEM</sequence>
<feature type="chain" id="PRO_0000450486" description="MFS-type transporter oryF">
    <location>
        <begin position="1"/>
        <end position="480"/>
    </location>
</feature>
<feature type="transmembrane region" description="Helical" evidence="1">
    <location>
        <begin position="41"/>
        <end position="61"/>
    </location>
</feature>
<feature type="transmembrane region" description="Helical" evidence="1">
    <location>
        <begin position="81"/>
        <end position="101"/>
    </location>
</feature>
<feature type="transmembrane region" description="Helical" evidence="1">
    <location>
        <begin position="107"/>
        <end position="127"/>
    </location>
</feature>
<feature type="transmembrane region" description="Helical" evidence="1">
    <location>
        <begin position="138"/>
        <end position="158"/>
    </location>
</feature>
<feature type="transmembrane region" description="Helical" evidence="1">
    <location>
        <begin position="170"/>
        <end position="190"/>
    </location>
</feature>
<feature type="transmembrane region" description="Helical" evidence="1">
    <location>
        <begin position="197"/>
        <end position="217"/>
    </location>
</feature>
<feature type="transmembrane region" description="Helical" evidence="1">
    <location>
        <begin position="264"/>
        <end position="284"/>
    </location>
</feature>
<feature type="transmembrane region" description="Helical" evidence="1">
    <location>
        <begin position="308"/>
        <end position="328"/>
    </location>
</feature>
<feature type="transmembrane region" description="Helical" evidence="1">
    <location>
        <begin position="351"/>
        <end position="371"/>
    </location>
</feature>
<feature type="transmembrane region" description="Helical" evidence="1">
    <location>
        <begin position="378"/>
        <end position="398"/>
    </location>
</feature>
<feature type="transmembrane region" description="Helical" evidence="1">
    <location>
        <begin position="415"/>
        <end position="435"/>
    </location>
</feature>
<feature type="transmembrane region" description="Helical" evidence="1">
    <location>
        <begin position="443"/>
        <end position="463"/>
    </location>
</feature>
<feature type="region of interest" description="Disordered" evidence="2">
    <location>
        <begin position="1"/>
        <end position="24"/>
    </location>
</feature>
<feature type="compositionally biased region" description="Basic and acidic residues" evidence="2">
    <location>
        <begin position="1"/>
        <end position="10"/>
    </location>
</feature>
<feature type="compositionally biased region" description="Low complexity" evidence="2">
    <location>
        <begin position="11"/>
        <end position="22"/>
    </location>
</feature>
<keyword id="KW-0472">Membrane</keyword>
<keyword id="KW-1185">Reference proteome</keyword>
<keyword id="KW-0812">Transmembrane</keyword>
<keyword id="KW-1133">Transmembrane helix</keyword>
<accession>Q2TXF2</accession>
<reference key="1">
    <citation type="journal article" date="2005" name="Nature">
        <title>Genome sequencing and analysis of Aspergillus oryzae.</title>
        <authorList>
            <person name="Machida M."/>
            <person name="Asai K."/>
            <person name="Sano M."/>
            <person name="Tanaka T."/>
            <person name="Kumagai T."/>
            <person name="Terai G."/>
            <person name="Kusumoto K."/>
            <person name="Arima T."/>
            <person name="Akita O."/>
            <person name="Kashiwagi Y."/>
            <person name="Abe K."/>
            <person name="Gomi K."/>
            <person name="Horiuchi H."/>
            <person name="Kitamoto K."/>
            <person name="Kobayashi T."/>
            <person name="Takeuchi M."/>
            <person name="Denning D.W."/>
            <person name="Galagan J.E."/>
            <person name="Nierman W.C."/>
            <person name="Yu J."/>
            <person name="Archer D.B."/>
            <person name="Bennett J.W."/>
            <person name="Bhatnagar D."/>
            <person name="Cleveland T.E."/>
            <person name="Fedorova N.D."/>
            <person name="Gotoh O."/>
            <person name="Horikawa H."/>
            <person name="Hosoyama A."/>
            <person name="Ichinomiya M."/>
            <person name="Igarashi R."/>
            <person name="Iwashita K."/>
            <person name="Juvvadi P.R."/>
            <person name="Kato M."/>
            <person name="Kato Y."/>
            <person name="Kin T."/>
            <person name="Kokubun A."/>
            <person name="Maeda H."/>
            <person name="Maeyama N."/>
            <person name="Maruyama J."/>
            <person name="Nagasaki H."/>
            <person name="Nakajima T."/>
            <person name="Oda K."/>
            <person name="Okada K."/>
            <person name="Paulsen I."/>
            <person name="Sakamoto K."/>
            <person name="Sawano T."/>
            <person name="Takahashi M."/>
            <person name="Takase K."/>
            <person name="Terabayashi Y."/>
            <person name="Wortman J.R."/>
            <person name="Yamada O."/>
            <person name="Yamagata Y."/>
            <person name="Anazawa H."/>
            <person name="Hata Y."/>
            <person name="Koide Y."/>
            <person name="Komori T."/>
            <person name="Koyama Y."/>
            <person name="Minetoki T."/>
            <person name="Suharnan S."/>
            <person name="Tanaka A."/>
            <person name="Isono K."/>
            <person name="Kuhara S."/>
            <person name="Ogasawara N."/>
            <person name="Kikuchi H."/>
        </authorList>
    </citation>
    <scope>NUCLEOTIDE SEQUENCE [LARGE SCALE GENOMIC DNA]</scope>
    <source>
        <strain>ATCC 42149 / RIB 40</strain>
    </source>
</reference>
<reference key="2">
    <citation type="journal article" date="2018" name="J. Fungi">
        <title>Oryzines A &amp; B, maleidride congeners from Aspergillus oryzae and their putative biosynthesis.</title>
        <authorList>
            <person name="Wasil Z."/>
            <person name="Kuhnert E."/>
            <person name="Simpson T.J."/>
            <person name="Cox R.J."/>
        </authorList>
    </citation>
    <scope>FUNCTION</scope>
</reference>
<organism>
    <name type="scientific">Aspergillus oryzae (strain ATCC 42149 / RIB 40)</name>
    <name type="common">Yellow koji mold</name>
    <dbReference type="NCBI Taxonomy" id="510516"/>
    <lineage>
        <taxon>Eukaryota</taxon>
        <taxon>Fungi</taxon>
        <taxon>Dikarya</taxon>
        <taxon>Ascomycota</taxon>
        <taxon>Pezizomycotina</taxon>
        <taxon>Eurotiomycetes</taxon>
        <taxon>Eurotiomycetidae</taxon>
        <taxon>Eurotiales</taxon>
        <taxon>Aspergillaceae</taxon>
        <taxon>Aspergillus</taxon>
        <taxon>Aspergillus subgen. Circumdati</taxon>
    </lineage>
</organism>
<gene>
    <name evidence="4" type="primary">oryF</name>
    <name type="ORF">AO090010000169</name>
</gene>
<protein>
    <recommendedName>
        <fullName evidence="4">MFS-type transporter oryF</fullName>
    </recommendedName>
    <alternativeName>
        <fullName evidence="4">Oryzines biosynthesis cluster protein F</fullName>
    </alternativeName>
</protein>